<feature type="chain" id="PRO_0000360833" description="Ribosome biogenesis GTPase A">
    <location>
        <begin position="1"/>
        <end position="282"/>
    </location>
</feature>
<feature type="domain" description="CP-type G" evidence="1">
    <location>
        <begin position="14"/>
        <end position="178"/>
    </location>
</feature>
<feature type="binding site">
    <location>
        <begin position="58"/>
        <end position="61"/>
    </location>
    <ligand>
        <name>GTP</name>
        <dbReference type="ChEBI" id="CHEBI:37565"/>
    </ligand>
</feature>
<feature type="binding site">
    <location>
        <begin position="86"/>
        <end position="87"/>
    </location>
    <ligand>
        <name>GTP</name>
        <dbReference type="ChEBI" id="CHEBI:37565"/>
    </ligand>
</feature>
<feature type="binding site">
    <location>
        <begin position="130"/>
        <end position="135"/>
    </location>
    <ligand>
        <name>GTP</name>
        <dbReference type="ChEBI" id="CHEBI:37565"/>
    </ligand>
</feature>
<feature type="binding site">
    <location>
        <position position="174"/>
    </location>
    <ligand>
        <name>GTP</name>
        <dbReference type="ChEBI" id="CHEBI:37565"/>
    </ligand>
</feature>
<feature type="helix" evidence="9">
    <location>
        <begin position="12"/>
        <end position="20"/>
    </location>
</feature>
<feature type="helix" evidence="9">
    <location>
        <begin position="21"/>
        <end position="23"/>
    </location>
</feature>
<feature type="strand" evidence="9">
    <location>
        <begin position="25"/>
        <end position="32"/>
    </location>
</feature>
<feature type="turn" evidence="9">
    <location>
        <begin position="36"/>
        <end position="39"/>
    </location>
</feature>
<feature type="helix" evidence="9">
    <location>
        <begin position="42"/>
        <end position="47"/>
    </location>
</feature>
<feature type="strand" evidence="9">
    <location>
        <begin position="49"/>
        <end position="51"/>
    </location>
</feature>
<feature type="strand" evidence="9">
    <location>
        <begin position="53"/>
        <end position="58"/>
    </location>
</feature>
<feature type="helix" evidence="9">
    <location>
        <begin position="60"/>
        <end position="62"/>
    </location>
</feature>
<feature type="helix" evidence="9">
    <location>
        <begin position="65"/>
        <end position="76"/>
    </location>
</feature>
<feature type="turn" evidence="9">
    <location>
        <begin position="77"/>
        <end position="79"/>
    </location>
</feature>
<feature type="strand" evidence="9">
    <location>
        <begin position="82"/>
        <end position="84"/>
    </location>
</feature>
<feature type="turn" evidence="9">
    <location>
        <begin position="87"/>
        <end position="89"/>
    </location>
</feature>
<feature type="helix" evidence="9">
    <location>
        <begin position="93"/>
        <end position="95"/>
    </location>
</feature>
<feature type="helix" evidence="9">
    <location>
        <begin position="96"/>
        <end position="113"/>
    </location>
</feature>
<feature type="strand" evidence="9">
    <location>
        <begin position="121"/>
        <end position="128"/>
    </location>
</feature>
<feature type="strand" evidence="10">
    <location>
        <begin position="129"/>
        <end position="132"/>
    </location>
</feature>
<feature type="helix" evidence="9">
    <location>
        <begin position="133"/>
        <end position="141"/>
    </location>
</feature>
<feature type="strand" evidence="10">
    <location>
        <begin position="150"/>
        <end position="152"/>
    </location>
</feature>
<feature type="strand" evidence="9">
    <location>
        <begin position="161"/>
        <end position="163"/>
    </location>
</feature>
<feature type="turn" evidence="9">
    <location>
        <begin position="164"/>
        <end position="166"/>
    </location>
</feature>
<feature type="strand" evidence="9">
    <location>
        <begin position="167"/>
        <end position="171"/>
    </location>
</feature>
<feature type="helix" evidence="9">
    <location>
        <begin position="183"/>
        <end position="192"/>
    </location>
</feature>
<feature type="strand" evidence="10">
    <location>
        <begin position="197"/>
        <end position="200"/>
    </location>
</feature>
<feature type="helix" evidence="9">
    <location>
        <begin position="202"/>
        <end position="216"/>
    </location>
</feature>
<feature type="helix" evidence="9">
    <location>
        <begin position="218"/>
        <end position="224"/>
    </location>
</feature>
<feature type="helix" evidence="9">
    <location>
        <begin position="234"/>
        <end position="245"/>
    </location>
</feature>
<feature type="helix" evidence="9">
    <location>
        <begin position="256"/>
        <end position="268"/>
    </location>
</feature>
<feature type="turn" evidence="9">
    <location>
        <begin position="269"/>
        <end position="272"/>
    </location>
</feature>
<organism>
    <name type="scientific">Bacillus subtilis (strain 168)</name>
    <dbReference type="NCBI Taxonomy" id="224308"/>
    <lineage>
        <taxon>Bacteria</taxon>
        <taxon>Bacillati</taxon>
        <taxon>Bacillota</taxon>
        <taxon>Bacilli</taxon>
        <taxon>Bacillales</taxon>
        <taxon>Bacillaceae</taxon>
        <taxon>Bacillus</taxon>
    </lineage>
</organism>
<protein>
    <recommendedName>
        <fullName>Ribosome biogenesis GTPase A</fullName>
    </recommendedName>
</protein>
<proteinExistence type="evidence at protein level"/>
<dbReference type="EMBL" id="AL009126">
    <property type="protein sequence ID" value="CAB13478.1"/>
    <property type="molecule type" value="Genomic_DNA"/>
</dbReference>
<dbReference type="PIR" id="F69880">
    <property type="entry name" value="F69880"/>
</dbReference>
<dbReference type="RefSeq" id="NP_389487.1">
    <property type="nucleotide sequence ID" value="NC_000964.3"/>
</dbReference>
<dbReference type="RefSeq" id="WP_009967235.1">
    <property type="nucleotide sequence ID" value="NZ_OZ025638.1"/>
</dbReference>
<dbReference type="PDB" id="1PUJ">
    <property type="method" value="X-ray"/>
    <property type="resolution" value="2.00 A"/>
    <property type="chains" value="A=1-282"/>
</dbReference>
<dbReference type="PDB" id="6PPK">
    <property type="method" value="EM"/>
    <property type="resolution" value="4.40 A"/>
    <property type="chains" value="W=1-282"/>
</dbReference>
<dbReference type="PDB" id="9BSL">
    <property type="method" value="EM"/>
    <property type="resolution" value="3.10 A"/>
    <property type="chains" value="V=1-282"/>
</dbReference>
<dbReference type="PDB" id="9BSS">
    <property type="method" value="EM"/>
    <property type="resolution" value="3.10 A"/>
    <property type="chains" value="V=1-282"/>
</dbReference>
<dbReference type="PDBsum" id="1PUJ"/>
<dbReference type="PDBsum" id="6PPK"/>
<dbReference type="PDBsum" id="9BSL"/>
<dbReference type="PDBsum" id="9BSS"/>
<dbReference type="EMDB" id="EMD-44869"/>
<dbReference type="EMDB" id="EMD-44871"/>
<dbReference type="SMR" id="O31743"/>
<dbReference type="FunCoup" id="O31743">
    <property type="interactions" value="699"/>
</dbReference>
<dbReference type="STRING" id="224308.BSU16050"/>
<dbReference type="PaxDb" id="224308-BSU16050"/>
<dbReference type="EnsemblBacteria" id="CAB13478">
    <property type="protein sequence ID" value="CAB13478"/>
    <property type="gene ID" value="BSU_16050"/>
</dbReference>
<dbReference type="GeneID" id="11239466"/>
<dbReference type="GeneID" id="940134"/>
<dbReference type="KEGG" id="bsu:BSU16050"/>
<dbReference type="PATRIC" id="fig|224308.179.peg.1745"/>
<dbReference type="eggNOG" id="COG1161">
    <property type="taxonomic scope" value="Bacteria"/>
</dbReference>
<dbReference type="InParanoid" id="O31743"/>
<dbReference type="OrthoDB" id="9779790at2"/>
<dbReference type="PhylomeDB" id="O31743"/>
<dbReference type="BioCyc" id="BSUB:BSU16050-MONOMER"/>
<dbReference type="EvolutionaryTrace" id="O31743"/>
<dbReference type="PRO" id="PR:O31743"/>
<dbReference type="Proteomes" id="UP000001570">
    <property type="component" value="Chromosome"/>
</dbReference>
<dbReference type="GO" id="GO:0005737">
    <property type="term" value="C:cytoplasm"/>
    <property type="evidence" value="ECO:0007669"/>
    <property type="project" value="UniProtKB-SubCell"/>
</dbReference>
<dbReference type="GO" id="GO:0005525">
    <property type="term" value="F:GTP binding"/>
    <property type="evidence" value="ECO:0007669"/>
    <property type="project" value="UniProtKB-KW"/>
</dbReference>
<dbReference type="GO" id="GO:0003924">
    <property type="term" value="F:GTPase activity"/>
    <property type="evidence" value="ECO:0000314"/>
    <property type="project" value="CACAO"/>
</dbReference>
<dbReference type="GO" id="GO:0003723">
    <property type="term" value="F:RNA binding"/>
    <property type="evidence" value="ECO:0007669"/>
    <property type="project" value="UniProtKB-KW"/>
</dbReference>
<dbReference type="GO" id="GO:0042254">
    <property type="term" value="P:ribosome biogenesis"/>
    <property type="evidence" value="ECO:0007669"/>
    <property type="project" value="UniProtKB-KW"/>
</dbReference>
<dbReference type="GO" id="GO:0006412">
    <property type="term" value="P:translation"/>
    <property type="evidence" value="ECO:0000318"/>
    <property type="project" value="GO_Central"/>
</dbReference>
<dbReference type="CDD" id="cd00882">
    <property type="entry name" value="Ras_like_GTPase"/>
    <property type="match status" value="1"/>
</dbReference>
<dbReference type="CDD" id="cd01856">
    <property type="entry name" value="YlqF"/>
    <property type="match status" value="1"/>
</dbReference>
<dbReference type="FunFam" id="1.10.1580.10:FF:000003">
    <property type="entry name" value="Ribosome biogenesis GTPase A"/>
    <property type="match status" value="1"/>
</dbReference>
<dbReference type="FunFam" id="3.40.50.300:FF:000590">
    <property type="entry name" value="Ribosome biogenesis GTPase A"/>
    <property type="match status" value="1"/>
</dbReference>
<dbReference type="Gene3D" id="1.10.1580.10">
    <property type="match status" value="1"/>
</dbReference>
<dbReference type="Gene3D" id="3.40.50.300">
    <property type="entry name" value="P-loop containing nucleotide triphosphate hydrolases"/>
    <property type="match status" value="1"/>
</dbReference>
<dbReference type="InterPro" id="IPR030378">
    <property type="entry name" value="G_CP_dom"/>
</dbReference>
<dbReference type="InterPro" id="IPR006073">
    <property type="entry name" value="GTP-bd"/>
</dbReference>
<dbReference type="InterPro" id="IPR023179">
    <property type="entry name" value="GTP-bd_ortho_bundle_sf"/>
</dbReference>
<dbReference type="InterPro" id="IPR019991">
    <property type="entry name" value="GTP-bd_ribosome_bgen"/>
</dbReference>
<dbReference type="InterPro" id="IPR016478">
    <property type="entry name" value="GTPase_MTG1"/>
</dbReference>
<dbReference type="InterPro" id="IPR027417">
    <property type="entry name" value="P-loop_NTPase"/>
</dbReference>
<dbReference type="NCBIfam" id="TIGR03596">
    <property type="entry name" value="GTPase_YlqF"/>
    <property type="match status" value="1"/>
</dbReference>
<dbReference type="PANTHER" id="PTHR45782">
    <property type="entry name" value="MITOCHONDRIAL RIBOSOME-ASSOCIATED GTPASE 1"/>
    <property type="match status" value="1"/>
</dbReference>
<dbReference type="PANTHER" id="PTHR45782:SF4">
    <property type="entry name" value="MITOCHONDRIAL RIBOSOME-ASSOCIATED GTPASE 1"/>
    <property type="match status" value="1"/>
</dbReference>
<dbReference type="Pfam" id="PF01926">
    <property type="entry name" value="MMR_HSR1"/>
    <property type="match status" value="1"/>
</dbReference>
<dbReference type="PIRSF" id="PIRSF006230">
    <property type="entry name" value="MG442"/>
    <property type="match status" value="1"/>
</dbReference>
<dbReference type="SUPFAM" id="SSF52540">
    <property type="entry name" value="P-loop containing nucleoside triphosphate hydrolases"/>
    <property type="match status" value="1"/>
</dbReference>
<dbReference type="PROSITE" id="PS51721">
    <property type="entry name" value="G_CP"/>
    <property type="match status" value="1"/>
</dbReference>
<keyword id="KW-0002">3D-structure</keyword>
<keyword id="KW-0963">Cytoplasm</keyword>
<keyword id="KW-0342">GTP-binding</keyword>
<keyword id="KW-0378">Hydrolase</keyword>
<keyword id="KW-0547">Nucleotide-binding</keyword>
<keyword id="KW-1185">Reference proteome</keyword>
<keyword id="KW-0690">Ribosome biogenesis</keyword>
<keyword id="KW-0694">RNA-binding</keyword>
<sequence length="282" mass="31986">MTIQWFPGHMAKARREVTEKLKLIDIVYELVDARIPMSSRNPMIEDILKNKPRIMLLNKADKADAAVTQQWKEHFENQGIRSLSINSVNGQGLNQIVPASKEILQEKFDRMRAKGVKPRAIRALIIGIPNVGKSTLINRLAKKNIAKTGDRPGITTSQQWVKVGKELELLDTPGILWPKFEDELVGLRLAVTGAIKDSIINLQDVAVFGLRFLEEHYPERLKERYGLDEIPEDIAELFDAIGEKRGCLMSGGLINYDKTTEVIIRDIRTEKFGRLSFEQPTM</sequence>
<comment type="function">
    <text evidence="3 4 5 6">Essential protein that is required for a late step of 50S ribosomal subunit assembly. Has GTPase activity that is stimulated by interaction with the immature 50S ribosome subunit. Binds to the 23S rRNA. Required for the association of ribosomal proteins RplP and RpmA with the large subunit.</text>
</comment>
<comment type="subunit">
    <text evidence="4 7">Interacts with ctc. Interacts with the immature 50S ribosome subunit. 2 molecules of RbgA bind to one 50S subunit.</text>
</comment>
<comment type="subcellular location">
    <subcellularLocation>
        <location evidence="8">Cytoplasm</location>
    </subcellularLocation>
</comment>
<comment type="disruption phenotype">
    <text evidence="2">Essential for growth, it cannot be disrupted. In depletion experiments cells become over 3-fold longer, are abnormally curved and nucleoids condense.</text>
</comment>
<comment type="miscellaneous">
    <text>Estimated to be present at 1000 copies per cell.</text>
</comment>
<comment type="similarity">
    <text evidence="1">Belongs to the TRAFAC class YlqF/YawG GTPase family. MTG1 subfamily.</text>
</comment>
<reference key="1">
    <citation type="journal article" date="1997" name="Nature">
        <title>The complete genome sequence of the Gram-positive bacterium Bacillus subtilis.</title>
        <authorList>
            <person name="Kunst F."/>
            <person name="Ogasawara N."/>
            <person name="Moszer I."/>
            <person name="Albertini A.M."/>
            <person name="Alloni G."/>
            <person name="Azevedo V."/>
            <person name="Bertero M.G."/>
            <person name="Bessieres P."/>
            <person name="Bolotin A."/>
            <person name="Borchert S."/>
            <person name="Borriss R."/>
            <person name="Boursier L."/>
            <person name="Brans A."/>
            <person name="Braun M."/>
            <person name="Brignell S.C."/>
            <person name="Bron S."/>
            <person name="Brouillet S."/>
            <person name="Bruschi C.V."/>
            <person name="Caldwell B."/>
            <person name="Capuano V."/>
            <person name="Carter N.M."/>
            <person name="Choi S.-K."/>
            <person name="Codani J.-J."/>
            <person name="Connerton I.F."/>
            <person name="Cummings N.J."/>
            <person name="Daniel R.A."/>
            <person name="Denizot F."/>
            <person name="Devine K.M."/>
            <person name="Duesterhoeft A."/>
            <person name="Ehrlich S.D."/>
            <person name="Emmerson P.T."/>
            <person name="Entian K.-D."/>
            <person name="Errington J."/>
            <person name="Fabret C."/>
            <person name="Ferrari E."/>
            <person name="Foulger D."/>
            <person name="Fritz C."/>
            <person name="Fujita M."/>
            <person name="Fujita Y."/>
            <person name="Fuma S."/>
            <person name="Galizzi A."/>
            <person name="Galleron N."/>
            <person name="Ghim S.-Y."/>
            <person name="Glaser P."/>
            <person name="Goffeau A."/>
            <person name="Golightly E.J."/>
            <person name="Grandi G."/>
            <person name="Guiseppi G."/>
            <person name="Guy B.J."/>
            <person name="Haga K."/>
            <person name="Haiech J."/>
            <person name="Harwood C.R."/>
            <person name="Henaut A."/>
            <person name="Hilbert H."/>
            <person name="Holsappel S."/>
            <person name="Hosono S."/>
            <person name="Hullo M.-F."/>
            <person name="Itaya M."/>
            <person name="Jones L.-M."/>
            <person name="Joris B."/>
            <person name="Karamata D."/>
            <person name="Kasahara Y."/>
            <person name="Klaerr-Blanchard M."/>
            <person name="Klein C."/>
            <person name="Kobayashi Y."/>
            <person name="Koetter P."/>
            <person name="Koningstein G."/>
            <person name="Krogh S."/>
            <person name="Kumano M."/>
            <person name="Kurita K."/>
            <person name="Lapidus A."/>
            <person name="Lardinois S."/>
            <person name="Lauber J."/>
            <person name="Lazarevic V."/>
            <person name="Lee S.-M."/>
            <person name="Levine A."/>
            <person name="Liu H."/>
            <person name="Masuda S."/>
            <person name="Mauel C."/>
            <person name="Medigue C."/>
            <person name="Medina N."/>
            <person name="Mellado R.P."/>
            <person name="Mizuno M."/>
            <person name="Moestl D."/>
            <person name="Nakai S."/>
            <person name="Noback M."/>
            <person name="Noone D."/>
            <person name="O'Reilly M."/>
            <person name="Ogawa K."/>
            <person name="Ogiwara A."/>
            <person name="Oudega B."/>
            <person name="Park S.-H."/>
            <person name="Parro V."/>
            <person name="Pohl T.M."/>
            <person name="Portetelle D."/>
            <person name="Porwollik S."/>
            <person name="Prescott A.M."/>
            <person name="Presecan E."/>
            <person name="Pujic P."/>
            <person name="Purnelle B."/>
            <person name="Rapoport G."/>
            <person name="Rey M."/>
            <person name="Reynolds S."/>
            <person name="Rieger M."/>
            <person name="Rivolta C."/>
            <person name="Rocha E."/>
            <person name="Roche B."/>
            <person name="Rose M."/>
            <person name="Sadaie Y."/>
            <person name="Sato T."/>
            <person name="Scanlan E."/>
            <person name="Schleich S."/>
            <person name="Schroeter R."/>
            <person name="Scoffone F."/>
            <person name="Sekiguchi J."/>
            <person name="Sekowska A."/>
            <person name="Seror S.J."/>
            <person name="Serror P."/>
            <person name="Shin B.-S."/>
            <person name="Soldo B."/>
            <person name="Sorokin A."/>
            <person name="Tacconi E."/>
            <person name="Takagi T."/>
            <person name="Takahashi H."/>
            <person name="Takemaru K."/>
            <person name="Takeuchi M."/>
            <person name="Tamakoshi A."/>
            <person name="Tanaka T."/>
            <person name="Terpstra P."/>
            <person name="Tognoni A."/>
            <person name="Tosato V."/>
            <person name="Uchiyama S."/>
            <person name="Vandenbol M."/>
            <person name="Vannier F."/>
            <person name="Vassarotti A."/>
            <person name="Viari A."/>
            <person name="Wambutt R."/>
            <person name="Wedler E."/>
            <person name="Wedler H."/>
            <person name="Weitzenegger T."/>
            <person name="Winters P."/>
            <person name="Wipat A."/>
            <person name="Yamamoto H."/>
            <person name="Yamane K."/>
            <person name="Yasumoto K."/>
            <person name="Yata K."/>
            <person name="Yoshida K."/>
            <person name="Yoshikawa H.-F."/>
            <person name="Zumstein E."/>
            <person name="Yoshikawa H."/>
            <person name="Danchin A."/>
        </authorList>
    </citation>
    <scope>NUCLEOTIDE SEQUENCE [LARGE SCALE GENOMIC DNA]</scope>
    <source>
        <strain>168</strain>
    </source>
</reference>
<reference key="2">
    <citation type="journal article" date="2006" name="J. Bacteriol.">
        <title>Multiple GTPases participate in the assembly of the large ribosomal subunit in Bacillus subtilis.</title>
        <authorList>
            <person name="Schaefer L."/>
            <person name="Uicker W.C."/>
            <person name="Wicker-Planquart C."/>
            <person name="Foucher A.-E."/>
            <person name="Jault J.-M."/>
            <person name="Britton R.A."/>
        </authorList>
    </citation>
    <scope>FUNCTION</scope>
</reference>
<reference key="3">
    <citation type="journal article" date="2002" name="Microbiology">
        <title>Six GTP-binding proteins of the Era/Obg family are essential for cell growth in Bacillus subtilis.</title>
        <authorList>
            <person name="Morimoto T."/>
            <person name="Loh P.C."/>
            <person name="Hirai T."/>
            <person name="Asai K."/>
            <person name="Kobayashi K."/>
            <person name="Moriya S."/>
            <person name="Ogasawara N."/>
        </authorList>
    </citation>
    <scope>GTP- AND GDP-BINDING</scope>
    <scope>PROTEIN LEVELS</scope>
    <scope>DISRUPTION PHENOTYPE</scope>
    <source>
        <strain>CRK6000</strain>
    </source>
</reference>
<reference key="4">
    <citation type="journal article" date="2006" name="J. Biol. Chem.">
        <title>The GTP-binding protein YlqF participates in the late step of 50 S ribosomal subunit assembly in Bacillus subtilis.</title>
        <authorList>
            <person name="Matsuo Y."/>
            <person name="Morimoto T."/>
            <person name="Kuwano M."/>
            <person name="Loh P.C."/>
            <person name="Oshima T."/>
            <person name="Ogasawara N."/>
        </authorList>
    </citation>
    <scope>FUNCTION</scope>
    <scope>INTERACTION WITH CTC AND WITH THE 23S RIBOSOMAL RNA</scope>
    <scope>SUBUNIT</scope>
</reference>
<reference key="5">
    <citation type="journal article" date="2006" name="Mol. Microbiol.">
        <title>The essential GTPase RbgA (YlqF) is required for 50S ribosome assembly in Bacillus subtilis.</title>
        <authorList>
            <person name="Uicker W.C."/>
            <person name="Schaefer L."/>
            <person name="Britton R.A."/>
        </authorList>
    </citation>
    <scope>FUNCTION</scope>
</reference>
<reference key="6">
    <citation type="journal article" date="2007" name="J. Biol. Chem.">
        <title>Isolation and characterization of a dominant negative mutant of Bacillus subtilis GTP-binding protein, YlqF, essential for biogenesis and maintenance of the 50 S ribosomal subunit.</title>
        <authorList>
            <person name="Matsuo Y."/>
            <person name="Oshima T."/>
            <person name="Loh P.C."/>
            <person name="Morimoto T."/>
            <person name="Ogasawara N."/>
        </authorList>
    </citation>
    <scope>FUNCTION</scope>
</reference>
<reference key="7">
    <citation type="submission" date="2005-01" db="PDB data bank">
        <title>Structure of the ylqF GTPase from B. subtilis.</title>
        <authorList>
            <consortium name="New York structural genomix research consortium (NYSGXRC)"/>
        </authorList>
    </citation>
    <scope>X-RAY CRYSTALLOGRAPHY (2.0 ANGSTROMS) IN COMPLEX WITH GTP ANALOG</scope>
</reference>
<evidence type="ECO:0000255" key="1">
    <source>
        <dbReference type="PROSITE-ProRule" id="PRU01058"/>
    </source>
</evidence>
<evidence type="ECO:0000269" key="2">
    <source>
    </source>
</evidence>
<evidence type="ECO:0000269" key="3">
    <source>
    </source>
</evidence>
<evidence type="ECO:0000269" key="4">
    <source>
    </source>
</evidence>
<evidence type="ECO:0000269" key="5">
    <source>
    </source>
</evidence>
<evidence type="ECO:0000269" key="6">
    <source>
    </source>
</evidence>
<evidence type="ECO:0000269" key="7">
    <source ref="7"/>
</evidence>
<evidence type="ECO:0000305" key="8"/>
<evidence type="ECO:0007829" key="9">
    <source>
        <dbReference type="PDB" id="1PUJ"/>
    </source>
</evidence>
<evidence type="ECO:0007829" key="10">
    <source>
        <dbReference type="PDB" id="9BSL"/>
    </source>
</evidence>
<gene>
    <name type="primary">rbgA</name>
    <name type="synonym">ylqF</name>
    <name type="ordered locus">BSU16050</name>
</gene>
<name>RBGA_BACSU</name>
<accession>O31743</accession>